<keyword id="KW-0378">Hydrolase</keyword>
<keyword id="KW-0479">Metal-binding</keyword>
<keyword id="KW-1185">Reference proteome</keyword>
<keyword id="KW-0862">Zinc</keyword>
<protein>
    <recommendedName>
        <fullName evidence="6">Lactamase-like protein aptB</fullName>
        <ecNumber evidence="4 8">3.1.-.-</ecNumber>
    </recommendedName>
    <alternativeName>
        <fullName evidence="6">Asperthecin synthesis protein B</fullName>
    </alternativeName>
</protein>
<evidence type="ECO:0000250" key="1">
    <source>
        <dbReference type="UniProtKB" id="Q988B9"/>
    </source>
</evidence>
<evidence type="ECO:0000255" key="2"/>
<evidence type="ECO:0000269" key="3">
    <source>
    </source>
</evidence>
<evidence type="ECO:0000269" key="4">
    <source>
    </source>
</evidence>
<evidence type="ECO:0000269" key="5">
    <source>
    </source>
</evidence>
<evidence type="ECO:0000303" key="6">
    <source>
    </source>
</evidence>
<evidence type="ECO:0000305" key="7"/>
<evidence type="ECO:0000305" key="8">
    <source>
    </source>
</evidence>
<name>APTB_EMENI</name>
<comment type="function">
    <text evidence="3 4">Lactamase-like protein; part of the gene cluster that mediates the biosynthesis of asperthecin, an anthraquinone pigment (PubMed:18978088, PubMed:21866960). Polyketide synthase (PKS) aptA catalyzes the formation of the aromatic polyketide from acetyl coenzyme A and seven malonyl coenzyme A molecules (PubMed:18978088). Polyketide is subsequently hydrolyzed by the action of aptB into endocrocin-9-anthrone (PubMed:18978088). Endocrocin-9-anthrone is then oxidized into endocrocin by aptC (PubMed:18978088). Endocrocin is likely to decarboxylate spontaneously to form emodin which explains why there is no decarboxylase in the asperthecin biosynthesis cluster (PubMed:18978088). Finally, aptC or another endogenous oxygenase catalyzes additional oxidation steps to form asperthecin.</text>
</comment>
<comment type="catalytic activity">
    <reaction evidence="4">
        <text>2,3,6,8,9-pentahydroxy-1-oxo-3-(2-oxopropyl)-1,2,3,4-tetrahydroanthracene-2-carboxyl-[ACP] + H2O = 2,3,6,8,9-pentahydroxy-1-oxo-3-(2-oxopropyl)-1,2,3,4-tetrahydroanthracene-2-carboxylate + holo-[ACP] + H(+)</text>
        <dbReference type="Rhea" id="RHEA:64080"/>
        <dbReference type="Rhea" id="RHEA-COMP:9685"/>
        <dbReference type="Rhea" id="RHEA-COMP:16517"/>
        <dbReference type="ChEBI" id="CHEBI:15377"/>
        <dbReference type="ChEBI" id="CHEBI:15378"/>
        <dbReference type="ChEBI" id="CHEBI:64479"/>
        <dbReference type="ChEBI" id="CHEBI:149683"/>
        <dbReference type="ChEBI" id="CHEBI:149686"/>
    </reaction>
    <physiologicalReaction direction="left-to-right" evidence="4">
        <dbReference type="Rhea" id="RHEA:64081"/>
    </physiologicalReaction>
</comment>
<comment type="cofactor">
    <cofactor evidence="1">
        <name>Zn(2+)</name>
        <dbReference type="ChEBI" id="CHEBI:29105"/>
    </cofactor>
    <text evidence="1">Binds 2 Zn(2+) ions per subunit.</text>
</comment>
<comment type="pathway">
    <text evidence="3">Secondary metabolite biosynthesis.</text>
</comment>
<comment type="induction">
    <text evidence="5">Expression is induced during late sexual development in the dark (PubMed:26773375).</text>
</comment>
<comment type="disruption phenotype">
    <text evidence="3">Fails to produce asperthecin (PubMed:18978088).</text>
</comment>
<comment type="similarity">
    <text evidence="7">Belongs to the metallo-beta-lactamase superfamily.</text>
</comment>
<proteinExistence type="evidence at protein level"/>
<reference key="1">
    <citation type="journal article" date="2005" name="Nature">
        <title>Sequencing of Aspergillus nidulans and comparative analysis with A. fumigatus and A. oryzae.</title>
        <authorList>
            <person name="Galagan J.E."/>
            <person name="Calvo S.E."/>
            <person name="Cuomo C."/>
            <person name="Ma L.-J."/>
            <person name="Wortman J.R."/>
            <person name="Batzoglou S."/>
            <person name="Lee S.-I."/>
            <person name="Bastuerkmen M."/>
            <person name="Spevak C.C."/>
            <person name="Clutterbuck J."/>
            <person name="Kapitonov V."/>
            <person name="Jurka J."/>
            <person name="Scazzocchio C."/>
            <person name="Farman M.L."/>
            <person name="Butler J."/>
            <person name="Purcell S."/>
            <person name="Harris S."/>
            <person name="Braus G.H."/>
            <person name="Draht O."/>
            <person name="Busch S."/>
            <person name="D'Enfert C."/>
            <person name="Bouchier C."/>
            <person name="Goldman G.H."/>
            <person name="Bell-Pedersen D."/>
            <person name="Griffiths-Jones S."/>
            <person name="Doonan J.H."/>
            <person name="Yu J."/>
            <person name="Vienken K."/>
            <person name="Pain A."/>
            <person name="Freitag M."/>
            <person name="Selker E.U."/>
            <person name="Archer D.B."/>
            <person name="Penalva M.A."/>
            <person name="Oakley B.R."/>
            <person name="Momany M."/>
            <person name="Tanaka T."/>
            <person name="Kumagai T."/>
            <person name="Asai K."/>
            <person name="Machida M."/>
            <person name="Nierman W.C."/>
            <person name="Denning D.W."/>
            <person name="Caddick M.X."/>
            <person name="Hynes M."/>
            <person name="Paoletti M."/>
            <person name="Fischer R."/>
            <person name="Miller B.L."/>
            <person name="Dyer P.S."/>
            <person name="Sachs M.S."/>
            <person name="Osmani S.A."/>
            <person name="Birren B.W."/>
        </authorList>
    </citation>
    <scope>NUCLEOTIDE SEQUENCE [LARGE SCALE GENOMIC DNA]</scope>
    <source>
        <strain>FGSC A4 / ATCC 38163 / CBS 112.46 / NRRL 194 / M139</strain>
    </source>
</reference>
<reference key="2">
    <citation type="journal article" date="2009" name="Fungal Genet. Biol.">
        <title>The 2008 update of the Aspergillus nidulans genome annotation: a community effort.</title>
        <authorList>
            <person name="Wortman J.R."/>
            <person name="Gilsenan J.M."/>
            <person name="Joardar V."/>
            <person name="Deegan J."/>
            <person name="Clutterbuck J."/>
            <person name="Andersen M.R."/>
            <person name="Archer D."/>
            <person name="Bencina M."/>
            <person name="Braus G."/>
            <person name="Coutinho P."/>
            <person name="von Dohren H."/>
            <person name="Doonan J."/>
            <person name="Driessen A.J."/>
            <person name="Durek P."/>
            <person name="Espeso E."/>
            <person name="Fekete E."/>
            <person name="Flipphi M."/>
            <person name="Estrada C.G."/>
            <person name="Geysens S."/>
            <person name="Goldman G."/>
            <person name="de Groot P.W."/>
            <person name="Hansen K."/>
            <person name="Harris S.D."/>
            <person name="Heinekamp T."/>
            <person name="Helmstaedt K."/>
            <person name="Henrissat B."/>
            <person name="Hofmann G."/>
            <person name="Homan T."/>
            <person name="Horio T."/>
            <person name="Horiuchi H."/>
            <person name="James S."/>
            <person name="Jones M."/>
            <person name="Karaffa L."/>
            <person name="Karanyi Z."/>
            <person name="Kato M."/>
            <person name="Keller N."/>
            <person name="Kelly D.E."/>
            <person name="Kiel J.A."/>
            <person name="Kim J.M."/>
            <person name="van der Klei I.J."/>
            <person name="Klis F.M."/>
            <person name="Kovalchuk A."/>
            <person name="Krasevec N."/>
            <person name="Kubicek C.P."/>
            <person name="Liu B."/>
            <person name="Maccabe A."/>
            <person name="Meyer V."/>
            <person name="Mirabito P."/>
            <person name="Miskei M."/>
            <person name="Mos M."/>
            <person name="Mullins J."/>
            <person name="Nelson D.R."/>
            <person name="Nielsen J."/>
            <person name="Oakley B.R."/>
            <person name="Osmani S.A."/>
            <person name="Pakula T."/>
            <person name="Paszewski A."/>
            <person name="Paulsen I."/>
            <person name="Pilsyk S."/>
            <person name="Pocsi I."/>
            <person name="Punt P.J."/>
            <person name="Ram A.F."/>
            <person name="Ren Q."/>
            <person name="Robellet X."/>
            <person name="Robson G."/>
            <person name="Seiboth B."/>
            <person name="van Solingen P."/>
            <person name="Specht T."/>
            <person name="Sun J."/>
            <person name="Taheri-Talesh N."/>
            <person name="Takeshita N."/>
            <person name="Ussery D."/>
            <person name="vanKuyk P.A."/>
            <person name="Visser H."/>
            <person name="van de Vondervoort P.J."/>
            <person name="de Vries R.P."/>
            <person name="Walton J."/>
            <person name="Xiang X."/>
            <person name="Xiong Y."/>
            <person name="Zeng A.P."/>
            <person name="Brandt B.W."/>
            <person name="Cornell M.J."/>
            <person name="van den Hondel C.A."/>
            <person name="Visser J."/>
            <person name="Oliver S.G."/>
            <person name="Turner G."/>
        </authorList>
    </citation>
    <scope>GENOME REANNOTATION</scope>
    <source>
        <strain>FGSC A4 / ATCC 38163 / CBS 112.46 / NRRL 194 / M139</strain>
    </source>
</reference>
<reference key="3">
    <citation type="journal article" date="2008" name="Appl. Environ. Microbiol.">
        <title>Identification and characterization of the asperthecin gene cluster of Aspergillus nidulans.</title>
        <authorList>
            <person name="Szewczyk E."/>
            <person name="Chiang Y.M."/>
            <person name="Oakley C.E."/>
            <person name="Davidson A.D."/>
            <person name="Wang C.C."/>
            <person name="Oakley B.R."/>
        </authorList>
    </citation>
    <scope>FUNCTION</scope>
    <scope>DISRUPTION PHENOTYPE</scope>
</reference>
<reference key="4">
    <citation type="journal article" date="2011" name="J. Am. Chem. Soc.">
        <title>Comparative characterization of fungal anthracenone and naphthacenedione biosynthetic pathways reveals an alpha-hydroxylation-dependent Claisen-like cyclization catalyzed by a dimanganese thioesterase.</title>
        <authorList>
            <person name="Li Y."/>
            <person name="Chooi Y.H."/>
            <person name="Sheng Y."/>
            <person name="Valentine J.S."/>
            <person name="Tang Y."/>
        </authorList>
    </citation>
    <scope>FUNCTION</scope>
    <scope>CATALYTIC ACTIVITY</scope>
</reference>
<reference key="5">
    <citation type="journal article" date="2016" name="Fungal Genet. Biol.">
        <title>Changes of global gene expression and secondary metabolite accumulation during light-dependent Aspergillus nidulans development.</title>
        <authorList>
            <person name="Bayram O."/>
            <person name="Feussner K."/>
            <person name="Dumkow M."/>
            <person name="Herrfurth C."/>
            <person name="Feussner I."/>
            <person name="Braus G.H."/>
        </authorList>
    </citation>
    <scope>INDUCTION</scope>
</reference>
<accession>Q5B0C9</accession>
<accession>C8V345</accession>
<feature type="chain" id="PRO_0000436111" description="Lactamase-like protein aptB">
    <location>
        <begin position="1"/>
        <end position="309"/>
    </location>
</feature>
<feature type="active site" description="Proton donor/acceptor" evidence="2">
    <location>
        <position position="101"/>
    </location>
</feature>
<feature type="binding site" evidence="1">
    <location>
        <position position="97"/>
    </location>
    <ligand>
        <name>Zn(2+)</name>
        <dbReference type="ChEBI" id="CHEBI:29105"/>
        <label>1</label>
        <note>catalytic</note>
    </ligand>
</feature>
<feature type="binding site" evidence="1">
    <location>
        <position position="99"/>
    </location>
    <ligand>
        <name>Zn(2+)</name>
        <dbReference type="ChEBI" id="CHEBI:29105"/>
        <label>1</label>
        <note>catalytic</note>
    </ligand>
</feature>
<feature type="binding site" evidence="1">
    <location>
        <position position="101"/>
    </location>
    <ligand>
        <name>Zn(2+)</name>
        <dbReference type="ChEBI" id="CHEBI:29105"/>
        <label>2</label>
        <note>catalytic</note>
    </ligand>
</feature>
<feature type="binding site" evidence="1">
    <location>
        <position position="102"/>
    </location>
    <ligand>
        <name>Zn(2+)</name>
        <dbReference type="ChEBI" id="CHEBI:29105"/>
        <label>2</label>
        <note>catalytic</note>
    </ligand>
</feature>
<sequence>MAFRIPFAQDFWNEYLSGRENTIPTLPVVTDITERVIRVLGGNAGPMRLQGTNTYLVGTGRSRILVDTGQGMPSWIRDIAKVLEERDIDISYVLLTHWHGDHTGGVPDLIAYNPALSSRIYKNRPDAGQKDILDGQVFRVEGATLRAVHTPGHAADHMCFLFEEENALFTGDNVLGHGYSVVEDLGQYMNSMVQMANLNLPLGYPAHGAVIDDLPDKMREYIKHREFRVQQVYAILEESRAAGQGRGRGGLTLHEIILAMYGEITDEVEKALAPFLSQVLWKLAEDRKVGFEPGSAAKRRWYVRSRRPN</sequence>
<organism>
    <name type="scientific">Emericella nidulans (strain FGSC A4 / ATCC 38163 / CBS 112.46 / NRRL 194 / M139)</name>
    <name type="common">Aspergillus nidulans</name>
    <dbReference type="NCBI Taxonomy" id="227321"/>
    <lineage>
        <taxon>Eukaryota</taxon>
        <taxon>Fungi</taxon>
        <taxon>Dikarya</taxon>
        <taxon>Ascomycota</taxon>
        <taxon>Pezizomycotina</taxon>
        <taxon>Eurotiomycetes</taxon>
        <taxon>Eurotiomycetidae</taxon>
        <taxon>Eurotiales</taxon>
        <taxon>Aspergillaceae</taxon>
        <taxon>Aspergillus</taxon>
        <taxon>Aspergillus subgen. Nidulantes</taxon>
    </lineage>
</organism>
<dbReference type="EC" id="3.1.-.-" evidence="4 8"/>
<dbReference type="EMBL" id="BN001301">
    <property type="protein sequence ID" value="CBF70385.1"/>
    <property type="molecule type" value="Genomic_DNA"/>
</dbReference>
<dbReference type="EMBL" id="AACD01000102">
    <property type="protein sequence ID" value="EAA57750.1"/>
    <property type="molecule type" value="Genomic_DNA"/>
</dbReference>
<dbReference type="RefSeq" id="XP_663605.1">
    <property type="nucleotide sequence ID" value="XM_658513.1"/>
</dbReference>
<dbReference type="SMR" id="Q5B0C9"/>
<dbReference type="STRING" id="227321.Q5B0C9"/>
<dbReference type="EnsemblFungi" id="CBF70385">
    <property type="protein sequence ID" value="CBF70385"/>
    <property type="gene ID" value="ANIA_06001"/>
</dbReference>
<dbReference type="GeneID" id="2871042"/>
<dbReference type="KEGG" id="ani:ANIA_06001"/>
<dbReference type="VEuPathDB" id="FungiDB:AN6001"/>
<dbReference type="eggNOG" id="KOG0813">
    <property type="taxonomic scope" value="Eukaryota"/>
</dbReference>
<dbReference type="HOGENOM" id="CLU_048478_1_0_1"/>
<dbReference type="InParanoid" id="Q5B0C9"/>
<dbReference type="OMA" id="PAKLIVW"/>
<dbReference type="OrthoDB" id="17458at2759"/>
<dbReference type="Proteomes" id="UP000000560">
    <property type="component" value="Chromosome I"/>
</dbReference>
<dbReference type="GO" id="GO:0016787">
    <property type="term" value="F:hydrolase activity"/>
    <property type="evidence" value="ECO:0007669"/>
    <property type="project" value="UniProtKB-KW"/>
</dbReference>
<dbReference type="GO" id="GO:0046872">
    <property type="term" value="F:metal ion binding"/>
    <property type="evidence" value="ECO:0007669"/>
    <property type="project" value="UniProtKB-KW"/>
</dbReference>
<dbReference type="GO" id="GO:0036184">
    <property type="term" value="P:asperthecin biosynthetic process"/>
    <property type="evidence" value="ECO:0000315"/>
    <property type="project" value="AspGD"/>
</dbReference>
<dbReference type="GO" id="GO:0044550">
    <property type="term" value="P:secondary metabolite biosynthetic process"/>
    <property type="evidence" value="ECO:0000318"/>
    <property type="project" value="GO_Central"/>
</dbReference>
<dbReference type="CDD" id="cd07722">
    <property type="entry name" value="LACTB2-like_MBL-fold"/>
    <property type="match status" value="1"/>
</dbReference>
<dbReference type="FunFam" id="3.60.15.10:FF:000041">
    <property type="entry name" value="Metallo-beta-lactamase domain protein"/>
    <property type="match status" value="1"/>
</dbReference>
<dbReference type="Gene3D" id="3.60.15.10">
    <property type="entry name" value="Ribonuclease Z/Hydroxyacylglutathione hydrolase-like"/>
    <property type="match status" value="1"/>
</dbReference>
<dbReference type="Gene3D" id="1.10.10.10">
    <property type="entry name" value="Winged helix-like DNA-binding domain superfamily/Winged helix DNA-binding domain"/>
    <property type="match status" value="1"/>
</dbReference>
<dbReference type="InterPro" id="IPR047921">
    <property type="entry name" value="LACTB2-like_MBL-fold"/>
</dbReference>
<dbReference type="InterPro" id="IPR001279">
    <property type="entry name" value="Metallo-B-lactamas"/>
</dbReference>
<dbReference type="InterPro" id="IPR036866">
    <property type="entry name" value="RibonucZ/Hydroxyglut_hydro"/>
</dbReference>
<dbReference type="InterPro" id="IPR050662">
    <property type="entry name" value="Sec-metab_biosynth-thioest"/>
</dbReference>
<dbReference type="InterPro" id="IPR036388">
    <property type="entry name" value="WH-like_DNA-bd_sf"/>
</dbReference>
<dbReference type="PANTHER" id="PTHR23131">
    <property type="entry name" value="ENDORIBONUCLEASE LACTB2"/>
    <property type="match status" value="1"/>
</dbReference>
<dbReference type="PANTHER" id="PTHR23131:SF2">
    <property type="entry name" value="LACTAMASE-LIKE PROTEIN APTB-RELATED"/>
    <property type="match status" value="1"/>
</dbReference>
<dbReference type="Pfam" id="PF00753">
    <property type="entry name" value="Lactamase_B"/>
    <property type="match status" value="2"/>
</dbReference>
<dbReference type="SMART" id="SM00849">
    <property type="entry name" value="Lactamase_B"/>
    <property type="match status" value="1"/>
</dbReference>
<dbReference type="SUPFAM" id="SSF56281">
    <property type="entry name" value="Metallo-hydrolase/oxidoreductase"/>
    <property type="match status" value="1"/>
</dbReference>
<gene>
    <name evidence="6" type="primary">aptB</name>
    <name type="ORF">AN6001.2</name>
</gene>